<protein>
    <recommendedName>
        <fullName evidence="1">Chitooligosaccharide deacetylase</fullName>
        <shortName evidence="1">COD</shortName>
        <ecNumber evidence="1">3.5.1.105</ecNumber>
    </recommendedName>
    <alternativeName>
        <fullName evidence="1">Chitin disaccharide deacetylase</fullName>
    </alternativeName>
    <alternativeName>
        <fullName evidence="1">Chitobiose deacetylase</fullName>
    </alternativeName>
    <alternativeName>
        <fullName evidence="1">Chitobiose-6P deacetylase</fullName>
    </alternativeName>
    <alternativeName>
        <fullName evidence="1">Chitotriose deacetylase</fullName>
    </alternativeName>
    <alternativeName>
        <fullName evidence="1">Chitotriose-6P deacetylase</fullName>
    </alternativeName>
</protein>
<sequence>MERLLIVNADDFGLSKGQNYGIIEACRNGIVTSTTALVNGQAIDHAVQLSRDEPSLAIGMHFVLTMGKPLTAMPGLTRDGVLGKWIWQLAEEDALPLEEITQELASQYLRFIELFGRKPTHLDSHHHVHMFPQIFPIVARFAAEQGIALRADRQMAFDLPVNLRTTQGFSSAFYGEEISESLFLQVLDDAGHRGDRSLEVMCHPAFIDNTIRQSAYCFPRLTELDVLTSASLKGAIAQRGYRLGSYRDV</sequence>
<name>CHBG_ECOLC</name>
<evidence type="ECO:0000255" key="1">
    <source>
        <dbReference type="HAMAP-Rule" id="MF_01246"/>
    </source>
</evidence>
<reference key="1">
    <citation type="submission" date="2008-02" db="EMBL/GenBank/DDBJ databases">
        <title>Complete sequence of Escherichia coli C str. ATCC 8739.</title>
        <authorList>
            <person name="Copeland A."/>
            <person name="Lucas S."/>
            <person name="Lapidus A."/>
            <person name="Glavina del Rio T."/>
            <person name="Dalin E."/>
            <person name="Tice H."/>
            <person name="Bruce D."/>
            <person name="Goodwin L."/>
            <person name="Pitluck S."/>
            <person name="Kiss H."/>
            <person name="Brettin T."/>
            <person name="Detter J.C."/>
            <person name="Han C."/>
            <person name="Kuske C.R."/>
            <person name="Schmutz J."/>
            <person name="Larimer F."/>
            <person name="Land M."/>
            <person name="Hauser L."/>
            <person name="Kyrpides N."/>
            <person name="Mikhailova N."/>
            <person name="Ingram L."/>
            <person name="Richardson P."/>
        </authorList>
    </citation>
    <scope>NUCLEOTIDE SEQUENCE [LARGE SCALE GENOMIC DNA]</scope>
    <source>
        <strain>ATCC 8739 / DSM 1576 / NBRC 3972 / NCIMB 8545 / WDCM 00012 / Crooks</strain>
    </source>
</reference>
<organism>
    <name type="scientific">Escherichia coli (strain ATCC 8739 / DSM 1576 / NBRC 3972 / NCIMB 8545 / WDCM 00012 / Crooks)</name>
    <dbReference type="NCBI Taxonomy" id="481805"/>
    <lineage>
        <taxon>Bacteria</taxon>
        <taxon>Pseudomonadati</taxon>
        <taxon>Pseudomonadota</taxon>
        <taxon>Gammaproteobacteria</taxon>
        <taxon>Enterobacterales</taxon>
        <taxon>Enterobacteriaceae</taxon>
        <taxon>Escherichia</taxon>
    </lineage>
</organism>
<proteinExistence type="inferred from homology"/>
<dbReference type="EC" id="3.5.1.105" evidence="1"/>
<dbReference type="EMBL" id="CP000946">
    <property type="protein sequence ID" value="ACA77547.1"/>
    <property type="molecule type" value="Genomic_DNA"/>
</dbReference>
<dbReference type="RefSeq" id="WP_000440458.1">
    <property type="nucleotide sequence ID" value="NZ_MTFT01000006.1"/>
</dbReference>
<dbReference type="SMR" id="B1IPJ7"/>
<dbReference type="KEGG" id="ecl:EcolC_1899"/>
<dbReference type="HOGENOM" id="CLU_064244_4_1_6"/>
<dbReference type="UniPathway" id="UPA00349"/>
<dbReference type="GO" id="GO:0005737">
    <property type="term" value="C:cytoplasm"/>
    <property type="evidence" value="ECO:0007669"/>
    <property type="project" value="UniProtKB-SubCell"/>
</dbReference>
<dbReference type="GO" id="GO:0036311">
    <property type="term" value="F:chitin disaccharide deacetylase activity"/>
    <property type="evidence" value="ECO:0007669"/>
    <property type="project" value="UniProtKB-UniRule"/>
</dbReference>
<dbReference type="GO" id="GO:0019213">
    <property type="term" value="F:deacetylase activity"/>
    <property type="evidence" value="ECO:0007669"/>
    <property type="project" value="TreeGrafter"/>
</dbReference>
<dbReference type="GO" id="GO:0046872">
    <property type="term" value="F:metal ion binding"/>
    <property type="evidence" value="ECO:0007669"/>
    <property type="project" value="UniProtKB-KW"/>
</dbReference>
<dbReference type="GO" id="GO:0006032">
    <property type="term" value="P:chitin catabolic process"/>
    <property type="evidence" value="ECO:0007669"/>
    <property type="project" value="UniProtKB-UniPathway"/>
</dbReference>
<dbReference type="GO" id="GO:0052777">
    <property type="term" value="P:diacetylchitobiose catabolic process"/>
    <property type="evidence" value="ECO:0007669"/>
    <property type="project" value="UniProtKB-UniRule"/>
</dbReference>
<dbReference type="GO" id="GO:0000272">
    <property type="term" value="P:polysaccharide catabolic process"/>
    <property type="evidence" value="ECO:0007669"/>
    <property type="project" value="UniProtKB-UniRule"/>
</dbReference>
<dbReference type="CDD" id="cd10803">
    <property type="entry name" value="YdjC_EF3048_like"/>
    <property type="match status" value="1"/>
</dbReference>
<dbReference type="FunFam" id="3.20.20.370:FF:000001">
    <property type="entry name" value="Chitooligosaccharide deacetylase"/>
    <property type="match status" value="1"/>
</dbReference>
<dbReference type="Gene3D" id="3.20.20.370">
    <property type="entry name" value="Glycoside hydrolase/deacetylase"/>
    <property type="match status" value="1"/>
</dbReference>
<dbReference type="HAMAP" id="MF_01246">
    <property type="entry name" value="COD"/>
    <property type="match status" value="1"/>
</dbReference>
<dbReference type="InterPro" id="IPR022948">
    <property type="entry name" value="COD_ChbG_bac"/>
</dbReference>
<dbReference type="InterPro" id="IPR011330">
    <property type="entry name" value="Glyco_hydro/deAcase_b/a-brl"/>
</dbReference>
<dbReference type="InterPro" id="IPR006879">
    <property type="entry name" value="YdjC-like"/>
</dbReference>
<dbReference type="NCBIfam" id="NF002559">
    <property type="entry name" value="PRK02134.1"/>
    <property type="match status" value="1"/>
</dbReference>
<dbReference type="PANTHER" id="PTHR31609:SF1">
    <property type="entry name" value="CARBOHYDRATE DEACETYLASE"/>
    <property type="match status" value="1"/>
</dbReference>
<dbReference type="PANTHER" id="PTHR31609">
    <property type="entry name" value="YDJC DEACETYLASE FAMILY MEMBER"/>
    <property type="match status" value="1"/>
</dbReference>
<dbReference type="Pfam" id="PF04794">
    <property type="entry name" value="YdjC"/>
    <property type="match status" value="1"/>
</dbReference>
<dbReference type="SUPFAM" id="SSF88713">
    <property type="entry name" value="Glycoside hydrolase/deacetylase"/>
    <property type="match status" value="1"/>
</dbReference>
<comment type="function">
    <text evidence="1">Involved in the degradation of chitin. ChbG is essential for growth on the acetylated chitooligosaccharides chitobiose and chitotriose but is dispensable for growth on cellobiose and chitosan dimer, the deacetylated form of chitobiose. Deacetylation of chitobiose-6-P and chitotriose-6-P is necessary for both the activation of the chb promoter by the regulatory protein ChbR and the hydrolysis of phosphorylated beta-glucosides by the phospho-beta-glucosidase ChbF. Catalyzes the removal of only one acetyl group from chitobiose-6-P to yield monoacetylchitobiose-6-P, the inducer of ChbR and the substrate of ChbF.</text>
</comment>
<comment type="catalytic activity">
    <reaction evidence="1">
        <text>N,N'-diacetylchitobiose + H2O = N-acetyl-beta-D-glucosaminyl-(1-&gt;4)-D-glucosamine + acetate</text>
        <dbReference type="Rhea" id="RHEA:27469"/>
        <dbReference type="ChEBI" id="CHEBI:15377"/>
        <dbReference type="ChEBI" id="CHEBI:28681"/>
        <dbReference type="ChEBI" id="CHEBI:30089"/>
        <dbReference type="ChEBI" id="CHEBI:59910"/>
        <dbReference type="EC" id="3.5.1.105"/>
    </reaction>
</comment>
<comment type="catalytic activity">
    <reaction evidence="1">
        <text>diacetylchitobiose-6'-phosphate + H2O = N'-monoacetylchitobiose-6'-phosphate + acetate</text>
        <dbReference type="Rhea" id="RHEA:35083"/>
        <dbReference type="ChEBI" id="CHEBI:15377"/>
        <dbReference type="ChEBI" id="CHEBI:30089"/>
        <dbReference type="ChEBI" id="CHEBI:64883"/>
        <dbReference type="ChEBI" id="CHEBI:71315"/>
    </reaction>
</comment>
<comment type="cofactor">
    <cofactor evidence="1">
        <name>Mg(2+)</name>
        <dbReference type="ChEBI" id="CHEBI:18420"/>
    </cofactor>
</comment>
<comment type="pathway">
    <text evidence="1">Glycan degradation; chitin degradation.</text>
</comment>
<comment type="subunit">
    <text evidence="1">Homodimer.</text>
</comment>
<comment type="subcellular location">
    <subcellularLocation>
        <location evidence="1">Cytoplasm</location>
    </subcellularLocation>
</comment>
<comment type="similarity">
    <text evidence="1">Belongs to the YdjC deacetylase family. ChbG subfamily.</text>
</comment>
<gene>
    <name evidence="1" type="primary">chbG</name>
    <name type="ordered locus">EcolC_1899</name>
</gene>
<feature type="chain" id="PRO_1000085762" description="Chitooligosaccharide deacetylase">
    <location>
        <begin position="1"/>
        <end position="249"/>
    </location>
</feature>
<feature type="binding site" evidence="1">
    <location>
        <position position="61"/>
    </location>
    <ligand>
        <name>Mg(2+)</name>
        <dbReference type="ChEBI" id="CHEBI:18420"/>
    </ligand>
</feature>
<feature type="binding site" evidence="1">
    <location>
        <position position="125"/>
    </location>
    <ligand>
        <name>Mg(2+)</name>
        <dbReference type="ChEBI" id="CHEBI:18420"/>
    </ligand>
</feature>
<keyword id="KW-0119">Carbohydrate metabolism</keyword>
<keyword id="KW-0146">Chitin degradation</keyword>
<keyword id="KW-0963">Cytoplasm</keyword>
<keyword id="KW-0378">Hydrolase</keyword>
<keyword id="KW-0460">Magnesium</keyword>
<keyword id="KW-0479">Metal-binding</keyword>
<keyword id="KW-0624">Polysaccharide degradation</keyword>
<accession>B1IPJ7</accession>